<dbReference type="EC" id="6.1.1.21" evidence="1"/>
<dbReference type="EMBL" id="BA000023">
    <property type="protein sequence ID" value="BAK54238.1"/>
    <property type="molecule type" value="Genomic_DNA"/>
</dbReference>
<dbReference type="RefSeq" id="WP_010978283.1">
    <property type="nucleotide sequence ID" value="NC_003106.2"/>
</dbReference>
<dbReference type="SMR" id="Q975U9"/>
<dbReference type="STRING" id="273063.STK_03230"/>
<dbReference type="GeneID" id="1458237"/>
<dbReference type="KEGG" id="sto:STK_03230"/>
<dbReference type="PATRIC" id="fig|273063.9.peg.379"/>
<dbReference type="eggNOG" id="arCOG00404">
    <property type="taxonomic scope" value="Archaea"/>
</dbReference>
<dbReference type="OrthoDB" id="8659at2157"/>
<dbReference type="Proteomes" id="UP000001015">
    <property type="component" value="Chromosome"/>
</dbReference>
<dbReference type="GO" id="GO:0005737">
    <property type="term" value="C:cytoplasm"/>
    <property type="evidence" value="ECO:0007669"/>
    <property type="project" value="UniProtKB-SubCell"/>
</dbReference>
<dbReference type="GO" id="GO:0005524">
    <property type="term" value="F:ATP binding"/>
    <property type="evidence" value="ECO:0007669"/>
    <property type="project" value="UniProtKB-UniRule"/>
</dbReference>
<dbReference type="GO" id="GO:0004821">
    <property type="term" value="F:histidine-tRNA ligase activity"/>
    <property type="evidence" value="ECO:0007669"/>
    <property type="project" value="UniProtKB-UniRule"/>
</dbReference>
<dbReference type="GO" id="GO:0006427">
    <property type="term" value="P:histidyl-tRNA aminoacylation"/>
    <property type="evidence" value="ECO:0007669"/>
    <property type="project" value="UniProtKB-UniRule"/>
</dbReference>
<dbReference type="GO" id="GO:0000105">
    <property type="term" value="P:L-histidine biosynthetic process"/>
    <property type="evidence" value="ECO:0007669"/>
    <property type="project" value="InterPro"/>
</dbReference>
<dbReference type="CDD" id="cd00773">
    <property type="entry name" value="HisRS-like_core"/>
    <property type="match status" value="1"/>
</dbReference>
<dbReference type="Gene3D" id="3.40.50.800">
    <property type="entry name" value="Anticodon-binding domain"/>
    <property type="match status" value="1"/>
</dbReference>
<dbReference type="Gene3D" id="3.30.930.10">
    <property type="entry name" value="Bira Bifunctional Protein, Domain 2"/>
    <property type="match status" value="1"/>
</dbReference>
<dbReference type="HAMAP" id="MF_00127">
    <property type="entry name" value="His_tRNA_synth"/>
    <property type="match status" value="1"/>
</dbReference>
<dbReference type="HAMAP" id="MF_00125">
    <property type="entry name" value="HisZ"/>
    <property type="match status" value="1"/>
</dbReference>
<dbReference type="InterPro" id="IPR006195">
    <property type="entry name" value="aa-tRNA-synth_II"/>
</dbReference>
<dbReference type="InterPro" id="IPR045864">
    <property type="entry name" value="aa-tRNA-synth_II/BPL/LPL"/>
</dbReference>
<dbReference type="InterPro" id="IPR004154">
    <property type="entry name" value="Anticodon-bd"/>
</dbReference>
<dbReference type="InterPro" id="IPR036621">
    <property type="entry name" value="Anticodon-bd_dom_sf"/>
</dbReference>
<dbReference type="InterPro" id="IPR015807">
    <property type="entry name" value="His-tRNA-ligase"/>
</dbReference>
<dbReference type="InterPro" id="IPR041715">
    <property type="entry name" value="HisRS-like_core"/>
</dbReference>
<dbReference type="InterPro" id="IPR004516">
    <property type="entry name" value="HisRS/HisZ"/>
</dbReference>
<dbReference type="InterPro" id="IPR004517">
    <property type="entry name" value="HisZ"/>
</dbReference>
<dbReference type="NCBIfam" id="TIGR00442">
    <property type="entry name" value="hisS"/>
    <property type="match status" value="1"/>
</dbReference>
<dbReference type="PANTHER" id="PTHR43707:SF1">
    <property type="entry name" value="HISTIDINE--TRNA LIGASE, MITOCHONDRIAL-RELATED"/>
    <property type="match status" value="1"/>
</dbReference>
<dbReference type="PANTHER" id="PTHR43707">
    <property type="entry name" value="HISTIDYL-TRNA SYNTHETASE"/>
    <property type="match status" value="1"/>
</dbReference>
<dbReference type="Pfam" id="PF03129">
    <property type="entry name" value="HGTP_anticodon"/>
    <property type="match status" value="1"/>
</dbReference>
<dbReference type="Pfam" id="PF13393">
    <property type="entry name" value="tRNA-synt_His"/>
    <property type="match status" value="1"/>
</dbReference>
<dbReference type="PIRSF" id="PIRSF001549">
    <property type="entry name" value="His-tRNA_synth"/>
    <property type="match status" value="1"/>
</dbReference>
<dbReference type="SUPFAM" id="SSF52954">
    <property type="entry name" value="Class II aaRS ABD-related"/>
    <property type="match status" value="1"/>
</dbReference>
<dbReference type="SUPFAM" id="SSF55681">
    <property type="entry name" value="Class II aaRS and biotin synthetases"/>
    <property type="match status" value="1"/>
</dbReference>
<dbReference type="PROSITE" id="PS50862">
    <property type="entry name" value="AA_TRNA_LIGASE_II"/>
    <property type="match status" value="1"/>
</dbReference>
<name>SYH_SULTO</name>
<accession>Q975U9</accession>
<accession>F9VMU1</accession>
<evidence type="ECO:0000255" key="1">
    <source>
        <dbReference type="HAMAP-Rule" id="MF_00127"/>
    </source>
</evidence>
<proteinExistence type="inferred from homology"/>
<keyword id="KW-0030">Aminoacyl-tRNA synthetase</keyword>
<keyword id="KW-0067">ATP-binding</keyword>
<keyword id="KW-0963">Cytoplasm</keyword>
<keyword id="KW-0436">Ligase</keyword>
<keyword id="KW-0547">Nucleotide-binding</keyword>
<keyword id="KW-0648">Protein biosynthesis</keyword>
<keyword id="KW-1185">Reference proteome</keyword>
<organism>
    <name type="scientific">Sulfurisphaera tokodaii (strain DSM 16993 / JCM 10545 / NBRC 100140 / 7)</name>
    <name type="common">Sulfolobus tokodaii</name>
    <dbReference type="NCBI Taxonomy" id="273063"/>
    <lineage>
        <taxon>Archaea</taxon>
        <taxon>Thermoproteota</taxon>
        <taxon>Thermoprotei</taxon>
        <taxon>Sulfolobales</taxon>
        <taxon>Sulfolobaceae</taxon>
        <taxon>Sulfurisphaera</taxon>
    </lineage>
</organism>
<sequence length="426" mass="48946">MISYEPVRGMKDYYGEELHKIKVVENAFLKIVKLAGYQEVETPIVEDFQLFALKGGEELRNTMYVFKDKAGREVALRPEFTPSIVRFYLNSLQHLPKPIRLYYLGTVYRYDEPQFGRYREFRQAGIELLGSSNIYSDLEILQILIEIYRELNLINKIRLKINNISLIRKILNKLNISDNLQEHFLHLIDKGKIDEALSLLPSSEYTELITNILSVNNLDISSYNKIKEDLTEKYNLKDLIQDLDRIMLLKNILDNLGVNSYIDLGFVRGLAYYTGLIFEVLHPSVSFSIAGGGRYDNLVELYGGPQTPAIGFAIGVERTALVLEEPNTVKEKQNKIGVIVLSDEAILYAIRIVDKLRSNNYIATINLKSISISKLIPSYAEEGYSFLIFIGKKEYEDKTITLKNLSTKEQVTIKEENLLDYLKQII</sequence>
<protein>
    <recommendedName>
        <fullName evidence="1">Histidine--tRNA ligase</fullName>
        <ecNumber evidence="1">6.1.1.21</ecNumber>
    </recommendedName>
    <alternativeName>
        <fullName evidence="1">Histidyl-tRNA synthetase</fullName>
        <shortName evidence="1">HisRS</shortName>
    </alternativeName>
</protein>
<feature type="chain" id="PRO_0000136327" description="Histidine--tRNA ligase">
    <location>
        <begin position="1"/>
        <end position="426"/>
    </location>
</feature>
<gene>
    <name evidence="1" type="primary">hisS</name>
    <name type="ordered locus">STK_03230</name>
</gene>
<reference key="1">
    <citation type="journal article" date="2001" name="DNA Res.">
        <title>Complete genome sequence of an aerobic thermoacidophilic Crenarchaeon, Sulfolobus tokodaii strain7.</title>
        <authorList>
            <person name="Kawarabayasi Y."/>
            <person name="Hino Y."/>
            <person name="Horikawa H."/>
            <person name="Jin-no K."/>
            <person name="Takahashi M."/>
            <person name="Sekine M."/>
            <person name="Baba S."/>
            <person name="Ankai A."/>
            <person name="Kosugi H."/>
            <person name="Hosoyama A."/>
            <person name="Fukui S."/>
            <person name="Nagai Y."/>
            <person name="Nishijima K."/>
            <person name="Otsuka R."/>
            <person name="Nakazawa H."/>
            <person name="Takamiya M."/>
            <person name="Kato Y."/>
            <person name="Yoshizawa T."/>
            <person name="Tanaka T."/>
            <person name="Kudoh Y."/>
            <person name="Yamazaki J."/>
            <person name="Kushida N."/>
            <person name="Oguchi A."/>
            <person name="Aoki K."/>
            <person name="Masuda S."/>
            <person name="Yanagii M."/>
            <person name="Nishimura M."/>
            <person name="Yamagishi A."/>
            <person name="Oshima T."/>
            <person name="Kikuchi H."/>
        </authorList>
    </citation>
    <scope>NUCLEOTIDE SEQUENCE [LARGE SCALE GENOMIC DNA]</scope>
    <source>
        <strain>DSM 16993 / JCM 10545 / NBRC 100140 / 7</strain>
    </source>
</reference>
<comment type="catalytic activity">
    <reaction evidence="1">
        <text>tRNA(His) + L-histidine + ATP = L-histidyl-tRNA(His) + AMP + diphosphate + H(+)</text>
        <dbReference type="Rhea" id="RHEA:17313"/>
        <dbReference type="Rhea" id="RHEA-COMP:9665"/>
        <dbReference type="Rhea" id="RHEA-COMP:9689"/>
        <dbReference type="ChEBI" id="CHEBI:15378"/>
        <dbReference type="ChEBI" id="CHEBI:30616"/>
        <dbReference type="ChEBI" id="CHEBI:33019"/>
        <dbReference type="ChEBI" id="CHEBI:57595"/>
        <dbReference type="ChEBI" id="CHEBI:78442"/>
        <dbReference type="ChEBI" id="CHEBI:78527"/>
        <dbReference type="ChEBI" id="CHEBI:456215"/>
        <dbReference type="EC" id="6.1.1.21"/>
    </reaction>
</comment>
<comment type="subcellular location">
    <subcellularLocation>
        <location>Cytoplasm</location>
    </subcellularLocation>
</comment>
<comment type="similarity">
    <text evidence="1">Belongs to the class-II aminoacyl-tRNA synthetase family.</text>
</comment>